<proteinExistence type="inferred from homology"/>
<name>EFTU_BRELN</name>
<feature type="chain" id="PRO_0000091293" description="Elongation factor Tu">
    <location>
        <begin position="1"/>
        <end position="397"/>
    </location>
</feature>
<feature type="domain" description="tr-type G">
    <location>
        <begin position="10"/>
        <end position="206"/>
    </location>
</feature>
<feature type="region of interest" description="G1" evidence="1">
    <location>
        <begin position="19"/>
        <end position="26"/>
    </location>
</feature>
<feature type="region of interest" description="G2" evidence="1">
    <location>
        <begin position="62"/>
        <end position="66"/>
    </location>
</feature>
<feature type="region of interest" description="G3" evidence="1">
    <location>
        <begin position="83"/>
        <end position="86"/>
    </location>
</feature>
<feature type="region of interest" description="G4" evidence="1">
    <location>
        <begin position="138"/>
        <end position="141"/>
    </location>
</feature>
<feature type="region of interest" description="G5" evidence="1">
    <location>
        <begin position="176"/>
        <end position="178"/>
    </location>
</feature>
<feature type="binding site" evidence="2">
    <location>
        <begin position="19"/>
        <end position="26"/>
    </location>
    <ligand>
        <name>GTP</name>
        <dbReference type="ChEBI" id="CHEBI:37565"/>
    </ligand>
</feature>
<feature type="binding site" evidence="2">
    <location>
        <position position="26"/>
    </location>
    <ligand>
        <name>Mg(2+)</name>
        <dbReference type="ChEBI" id="CHEBI:18420"/>
    </ligand>
</feature>
<feature type="binding site" evidence="2">
    <location>
        <begin position="83"/>
        <end position="87"/>
    </location>
    <ligand>
        <name>GTP</name>
        <dbReference type="ChEBI" id="CHEBI:37565"/>
    </ligand>
</feature>
<feature type="binding site" evidence="2">
    <location>
        <begin position="138"/>
        <end position="141"/>
    </location>
    <ligand>
        <name>GTP</name>
        <dbReference type="ChEBI" id="CHEBI:37565"/>
    </ligand>
</feature>
<comment type="function">
    <text evidence="2">GTP hydrolase that promotes the GTP-dependent binding of aminoacyl-tRNA to the A-site of ribosomes during protein biosynthesis.</text>
</comment>
<comment type="catalytic activity">
    <reaction evidence="2">
        <text>GTP + H2O = GDP + phosphate + H(+)</text>
        <dbReference type="Rhea" id="RHEA:19669"/>
        <dbReference type="ChEBI" id="CHEBI:15377"/>
        <dbReference type="ChEBI" id="CHEBI:15378"/>
        <dbReference type="ChEBI" id="CHEBI:37565"/>
        <dbReference type="ChEBI" id="CHEBI:43474"/>
        <dbReference type="ChEBI" id="CHEBI:58189"/>
        <dbReference type="EC" id="3.6.5.3"/>
    </reaction>
    <physiologicalReaction direction="left-to-right" evidence="2">
        <dbReference type="Rhea" id="RHEA:19670"/>
    </physiologicalReaction>
</comment>
<comment type="subunit">
    <text evidence="2">Monomer.</text>
</comment>
<comment type="subcellular location">
    <subcellularLocation>
        <location evidence="2">Cytoplasm</location>
    </subcellularLocation>
</comment>
<comment type="similarity">
    <text evidence="2">Belongs to the TRAFAC class translation factor GTPase superfamily. Classic translation factor GTPase family. EF-Tu/EF-1A subfamily.</text>
</comment>
<evidence type="ECO:0000250" key="1"/>
<evidence type="ECO:0000255" key="2">
    <source>
        <dbReference type="HAMAP-Rule" id="MF_00118"/>
    </source>
</evidence>
<keyword id="KW-0963">Cytoplasm</keyword>
<keyword id="KW-0251">Elongation factor</keyword>
<keyword id="KW-0342">GTP-binding</keyword>
<keyword id="KW-0378">Hydrolase</keyword>
<keyword id="KW-0460">Magnesium</keyword>
<keyword id="KW-0479">Metal-binding</keyword>
<keyword id="KW-0547">Nucleotide-binding</keyword>
<keyword id="KW-0648">Protein biosynthesis</keyword>
<dbReference type="EC" id="3.6.5.3" evidence="2"/>
<dbReference type="EMBL" id="X76863">
    <property type="protein sequence ID" value="CAA54192.1"/>
    <property type="molecule type" value="Genomic_DNA"/>
</dbReference>
<dbReference type="PIR" id="I40216">
    <property type="entry name" value="I40216"/>
</dbReference>
<dbReference type="SMR" id="P42471"/>
<dbReference type="STRING" id="1703.BLSMQ_1225"/>
<dbReference type="eggNOG" id="COG0050">
    <property type="taxonomic scope" value="Bacteria"/>
</dbReference>
<dbReference type="GO" id="GO:0005829">
    <property type="term" value="C:cytosol"/>
    <property type="evidence" value="ECO:0007669"/>
    <property type="project" value="TreeGrafter"/>
</dbReference>
<dbReference type="GO" id="GO:0005525">
    <property type="term" value="F:GTP binding"/>
    <property type="evidence" value="ECO:0007669"/>
    <property type="project" value="UniProtKB-UniRule"/>
</dbReference>
<dbReference type="GO" id="GO:0003924">
    <property type="term" value="F:GTPase activity"/>
    <property type="evidence" value="ECO:0007669"/>
    <property type="project" value="InterPro"/>
</dbReference>
<dbReference type="GO" id="GO:0003746">
    <property type="term" value="F:translation elongation factor activity"/>
    <property type="evidence" value="ECO:0007669"/>
    <property type="project" value="UniProtKB-UniRule"/>
</dbReference>
<dbReference type="CDD" id="cd01884">
    <property type="entry name" value="EF_Tu"/>
    <property type="match status" value="1"/>
</dbReference>
<dbReference type="CDD" id="cd03697">
    <property type="entry name" value="EFTU_II"/>
    <property type="match status" value="1"/>
</dbReference>
<dbReference type="CDD" id="cd03707">
    <property type="entry name" value="EFTU_III"/>
    <property type="match status" value="1"/>
</dbReference>
<dbReference type="FunFam" id="2.40.30.10:FF:000001">
    <property type="entry name" value="Elongation factor Tu"/>
    <property type="match status" value="1"/>
</dbReference>
<dbReference type="FunFam" id="3.40.50.300:FF:000003">
    <property type="entry name" value="Elongation factor Tu"/>
    <property type="match status" value="1"/>
</dbReference>
<dbReference type="Gene3D" id="3.40.50.300">
    <property type="entry name" value="P-loop containing nucleotide triphosphate hydrolases"/>
    <property type="match status" value="1"/>
</dbReference>
<dbReference type="Gene3D" id="2.40.30.10">
    <property type="entry name" value="Translation factors"/>
    <property type="match status" value="2"/>
</dbReference>
<dbReference type="HAMAP" id="MF_00118_B">
    <property type="entry name" value="EF_Tu_B"/>
    <property type="match status" value="1"/>
</dbReference>
<dbReference type="InterPro" id="IPR041709">
    <property type="entry name" value="EF-Tu_GTP-bd"/>
</dbReference>
<dbReference type="InterPro" id="IPR050055">
    <property type="entry name" value="EF-Tu_GTPase"/>
</dbReference>
<dbReference type="InterPro" id="IPR004161">
    <property type="entry name" value="EFTu-like_2"/>
</dbReference>
<dbReference type="InterPro" id="IPR033720">
    <property type="entry name" value="EFTU_2"/>
</dbReference>
<dbReference type="InterPro" id="IPR031157">
    <property type="entry name" value="G_TR_CS"/>
</dbReference>
<dbReference type="InterPro" id="IPR027417">
    <property type="entry name" value="P-loop_NTPase"/>
</dbReference>
<dbReference type="InterPro" id="IPR005225">
    <property type="entry name" value="Small_GTP-bd"/>
</dbReference>
<dbReference type="InterPro" id="IPR000795">
    <property type="entry name" value="T_Tr_GTP-bd_dom"/>
</dbReference>
<dbReference type="InterPro" id="IPR009000">
    <property type="entry name" value="Transl_B-barrel_sf"/>
</dbReference>
<dbReference type="InterPro" id="IPR009001">
    <property type="entry name" value="Transl_elong_EF1A/Init_IF2_C"/>
</dbReference>
<dbReference type="InterPro" id="IPR004541">
    <property type="entry name" value="Transl_elong_EFTu/EF1A_bac/org"/>
</dbReference>
<dbReference type="InterPro" id="IPR004160">
    <property type="entry name" value="Transl_elong_EFTu/EF1A_C"/>
</dbReference>
<dbReference type="NCBIfam" id="TIGR00485">
    <property type="entry name" value="EF-Tu"/>
    <property type="match status" value="1"/>
</dbReference>
<dbReference type="NCBIfam" id="NF000766">
    <property type="entry name" value="PRK00049.1"/>
    <property type="match status" value="1"/>
</dbReference>
<dbReference type="NCBIfam" id="NF009372">
    <property type="entry name" value="PRK12735.1"/>
    <property type="match status" value="1"/>
</dbReference>
<dbReference type="NCBIfam" id="NF009373">
    <property type="entry name" value="PRK12736.1"/>
    <property type="match status" value="1"/>
</dbReference>
<dbReference type="NCBIfam" id="TIGR00231">
    <property type="entry name" value="small_GTP"/>
    <property type="match status" value="1"/>
</dbReference>
<dbReference type="PANTHER" id="PTHR43721:SF22">
    <property type="entry name" value="ELONGATION FACTOR TU, MITOCHONDRIAL"/>
    <property type="match status" value="1"/>
</dbReference>
<dbReference type="PANTHER" id="PTHR43721">
    <property type="entry name" value="ELONGATION FACTOR TU-RELATED"/>
    <property type="match status" value="1"/>
</dbReference>
<dbReference type="Pfam" id="PF00009">
    <property type="entry name" value="GTP_EFTU"/>
    <property type="match status" value="1"/>
</dbReference>
<dbReference type="Pfam" id="PF03144">
    <property type="entry name" value="GTP_EFTU_D2"/>
    <property type="match status" value="1"/>
</dbReference>
<dbReference type="Pfam" id="PF03143">
    <property type="entry name" value="GTP_EFTU_D3"/>
    <property type="match status" value="1"/>
</dbReference>
<dbReference type="PRINTS" id="PR00315">
    <property type="entry name" value="ELONGATNFCT"/>
</dbReference>
<dbReference type="SUPFAM" id="SSF50465">
    <property type="entry name" value="EF-Tu/eEF-1alpha/eIF2-gamma C-terminal domain"/>
    <property type="match status" value="1"/>
</dbReference>
<dbReference type="SUPFAM" id="SSF52540">
    <property type="entry name" value="P-loop containing nucleoside triphosphate hydrolases"/>
    <property type="match status" value="1"/>
</dbReference>
<dbReference type="SUPFAM" id="SSF50447">
    <property type="entry name" value="Translation proteins"/>
    <property type="match status" value="1"/>
</dbReference>
<dbReference type="PROSITE" id="PS00301">
    <property type="entry name" value="G_TR_1"/>
    <property type="match status" value="1"/>
</dbReference>
<dbReference type="PROSITE" id="PS51722">
    <property type="entry name" value="G_TR_2"/>
    <property type="match status" value="1"/>
</dbReference>
<reference key="1">
    <citation type="journal article" date="1993" name="Antonie Van Leeuwenhoek">
        <title>Phylogenetic relationships of Bacteria based on comparative sequence analysis of elongation factor Tu and ATP-synthase beta-subunit genes.</title>
        <authorList>
            <person name="Ludwig W."/>
            <person name="Neumaier J."/>
            <person name="Klugbauer N."/>
            <person name="Brockmann E."/>
            <person name="Roller C."/>
            <person name="Klugbauer S."/>
            <person name="Reetz K."/>
            <person name="Schachtner I."/>
            <person name="Ludvigsen A."/>
            <person name="Bachleitner M."/>
            <person name="Fischer U."/>
            <person name="Schleifer K.H."/>
        </authorList>
    </citation>
    <scope>NUCLEOTIDE SEQUENCE [GENOMIC DNA]</scope>
    <source>
        <strain>ATCC 9172 / DSM 20425 / NCIB 9909 / 56b</strain>
    </source>
</reference>
<protein>
    <recommendedName>
        <fullName evidence="2">Elongation factor Tu</fullName>
        <shortName evidence="2">EF-Tu</shortName>
        <ecNumber evidence="2">3.6.5.3</ecNumber>
    </recommendedName>
</protein>
<gene>
    <name evidence="2" type="primary">tuf</name>
</gene>
<sequence length="397" mass="43786">MAKASFERTKPHVNIGTIGHVDHGKTTLTAAITKVLADQYPDLNEARAFDQVDNAPEEKERGITINVSHVEYQTEKRHYAHVDAPGHADYVKNMITGAAQMDGAILVVAATDGPMPQTREHVLLARQVGVPYIVVALNKSDMVDDEELLELVEFEVRDLLSSQDFDGDNAPVIPVSALKALEGDEKWVKSVQDLMAAVDDNVPEPERDVDKPFLMPVEDVFTITGRGTVVTGRVERGVLLPNDEIEIVGIKEKSSKTTVTAIEMFRKTLPDARAGENVGLLLRGTKREDVERGQVIVKPGSITPHTKFEAQVYILSKDEGGRHNPFYSNYRPQFYFRTTDVTGVITLPEGTEMVMPGDNTDMSVELIQPIAMEDRLRFAIREGGRTVGAGRVTKITA</sequence>
<accession>P42471</accession>
<organism>
    <name type="scientific">Brevibacterium linens</name>
    <dbReference type="NCBI Taxonomy" id="1703"/>
    <lineage>
        <taxon>Bacteria</taxon>
        <taxon>Bacillati</taxon>
        <taxon>Actinomycetota</taxon>
        <taxon>Actinomycetes</taxon>
        <taxon>Micrococcales</taxon>
        <taxon>Brevibacteriaceae</taxon>
        <taxon>Brevibacterium</taxon>
    </lineage>
</organism>